<sequence length="266" mass="29992">MRKNTYAMRYVAGQPAERILPPGSFASIGQALPPGEPLSTEERIRILVWNIYKQQRAEWLSVLKNYGKDAHLVLLQEAQTTPELVQFATANYLAADQVPAFVLPQHPSGVMTLSAAHPVYCCPLREREPILRLAKSALVTVYPLPDTRLLMVVNIHAVNFSLGVDVYSKQLLPIGDQIAHHSGPVIMAGDFNAWSRRRMNALYRFAREMSLRQVRFTDDQRRRAFGRPLDFVFYRGLNVSEASVLVTRASDHNPLLVEFSPGKPDK</sequence>
<keyword id="KW-0963">Cytoplasm</keyword>
<comment type="subcellular location">
    <subcellularLocation>
        <location evidence="1">Cytoplasm</location>
    </subcellularLocation>
</comment>
<comment type="similarity">
    <text evidence="1">Belongs to the UPF0294 family.</text>
</comment>
<accession>C4ZRU6</accession>
<reference key="1">
    <citation type="journal article" date="2009" name="J. Bacteriol.">
        <title>Genomic sequencing reveals regulatory mutations and recombinational events in the widely used MC4100 lineage of Escherichia coli K-12.</title>
        <authorList>
            <person name="Ferenci T."/>
            <person name="Zhou Z."/>
            <person name="Betteridge T."/>
            <person name="Ren Y."/>
            <person name="Liu Y."/>
            <person name="Feng L."/>
            <person name="Reeves P.R."/>
            <person name="Wang L."/>
        </authorList>
    </citation>
    <scope>NUCLEOTIDE SEQUENCE [LARGE SCALE GENOMIC DNA]</scope>
    <source>
        <strain>K12 / MC4100 / BW2952</strain>
    </source>
</reference>
<feature type="chain" id="PRO_1000213612" description="UPF0294 protein YafD">
    <location>
        <begin position="1"/>
        <end position="266"/>
    </location>
</feature>
<protein>
    <recommendedName>
        <fullName evidence="1">UPF0294 protein YafD</fullName>
    </recommendedName>
</protein>
<proteinExistence type="inferred from homology"/>
<name>YAFD_ECOBW</name>
<dbReference type="EMBL" id="CP001396">
    <property type="protein sequence ID" value="ACR62429.1"/>
    <property type="molecule type" value="Genomic_DNA"/>
</dbReference>
<dbReference type="RefSeq" id="WP_001230983.1">
    <property type="nucleotide sequence ID" value="NC_012759.1"/>
</dbReference>
<dbReference type="SMR" id="C4ZRU6"/>
<dbReference type="KEGG" id="ebw:BWG_0196"/>
<dbReference type="HOGENOM" id="CLU_083563_0_0_6"/>
<dbReference type="GO" id="GO:0005737">
    <property type="term" value="C:cytoplasm"/>
    <property type="evidence" value="ECO:0007669"/>
    <property type="project" value="UniProtKB-SubCell"/>
</dbReference>
<dbReference type="GO" id="GO:0003824">
    <property type="term" value="F:catalytic activity"/>
    <property type="evidence" value="ECO:0007669"/>
    <property type="project" value="InterPro"/>
</dbReference>
<dbReference type="Gene3D" id="3.60.10.10">
    <property type="entry name" value="Endonuclease/exonuclease/phosphatase"/>
    <property type="match status" value="1"/>
</dbReference>
<dbReference type="HAMAP" id="MF_01119">
    <property type="entry name" value="UPF0294"/>
    <property type="match status" value="1"/>
</dbReference>
<dbReference type="InterPro" id="IPR036691">
    <property type="entry name" value="Endo/exonu/phosph_ase_sf"/>
</dbReference>
<dbReference type="InterPro" id="IPR005135">
    <property type="entry name" value="Endo/exonuclease/phosphatase"/>
</dbReference>
<dbReference type="InterPro" id="IPR022958">
    <property type="entry name" value="UPF0294"/>
</dbReference>
<dbReference type="NCBIfam" id="NF003839">
    <property type="entry name" value="PRK05421.1-1"/>
    <property type="match status" value="1"/>
</dbReference>
<dbReference type="NCBIfam" id="NF003840">
    <property type="entry name" value="PRK05421.1-2"/>
    <property type="match status" value="1"/>
</dbReference>
<dbReference type="NCBIfam" id="NF003841">
    <property type="entry name" value="PRK05421.1-3"/>
    <property type="match status" value="1"/>
</dbReference>
<dbReference type="NCBIfam" id="NF003842">
    <property type="entry name" value="PRK05421.1-4"/>
    <property type="match status" value="1"/>
</dbReference>
<dbReference type="Pfam" id="PF03372">
    <property type="entry name" value="Exo_endo_phos"/>
    <property type="match status" value="1"/>
</dbReference>
<dbReference type="SUPFAM" id="SSF56219">
    <property type="entry name" value="DNase I-like"/>
    <property type="match status" value="1"/>
</dbReference>
<evidence type="ECO:0000255" key="1">
    <source>
        <dbReference type="HAMAP-Rule" id="MF_01119"/>
    </source>
</evidence>
<organism>
    <name type="scientific">Escherichia coli (strain K12 / MC4100 / BW2952)</name>
    <dbReference type="NCBI Taxonomy" id="595496"/>
    <lineage>
        <taxon>Bacteria</taxon>
        <taxon>Pseudomonadati</taxon>
        <taxon>Pseudomonadota</taxon>
        <taxon>Gammaproteobacteria</taxon>
        <taxon>Enterobacterales</taxon>
        <taxon>Enterobacteriaceae</taxon>
        <taxon>Escherichia</taxon>
    </lineage>
</organism>
<gene>
    <name evidence="1" type="primary">yafD</name>
    <name type="ordered locus">BWG_0196</name>
</gene>